<keyword id="KW-1015">Disulfide bond</keyword>
<keyword id="KW-0325">Glycoprotein</keyword>
<keyword id="KW-0358">Heparin-binding</keyword>
<keyword id="KW-0393">Immunoglobulin domain</keyword>
<keyword id="KW-0472">Membrane</keyword>
<keyword id="KW-0654">Proteoglycan</keyword>
<keyword id="KW-1185">Reference proteome</keyword>
<keyword id="KW-0677">Repeat</keyword>
<keyword id="KW-0732">Signal</keyword>
<keyword id="KW-0812">Transmembrane</keyword>
<keyword id="KW-1133">Transmembrane helix</keyword>
<name>IHOG_DROAN</name>
<gene>
    <name evidence="1" type="primary">iHog</name>
    <name type="ORF">GF14467</name>
</gene>
<comment type="function">
    <text evidence="1">Mediates response to the active Hedgehog (Hh) protein signal in embryos, functioning upstream or at the level of patched (ptc).</text>
</comment>
<comment type="subunit">
    <text evidence="1">Homodimer. Heterotetramer; 2 iHog chains bind 2 hh chains when facilitated by heparin, heparin is required to promote high-affinity interactions between hh and iHog (By similarity).</text>
</comment>
<comment type="subcellular location">
    <subcellularLocation>
        <location evidence="2">Membrane</location>
        <topology evidence="1 2">Single-pass type I membrane protein</topology>
    </subcellularLocation>
</comment>
<comment type="domain">
    <text evidence="1">The first fibronectin type-III domain mediates a specific interaction with Hh protein, in vitro. The second fibronectin type-III domain is additionally required for in vivo signaling activity (By similarity).</text>
</comment>
<comment type="similarity">
    <text evidence="2 6">Belongs to the immunoglobulin superfamily. IHOG family.</text>
</comment>
<dbReference type="EMBL" id="CH902620">
    <property type="protein sequence ID" value="EDV31601.1"/>
    <property type="molecule type" value="Genomic_DNA"/>
</dbReference>
<dbReference type="SMR" id="B3MKS0"/>
<dbReference type="FunCoup" id="B3MKS0">
    <property type="interactions" value="42"/>
</dbReference>
<dbReference type="STRING" id="7217.B3MKS0"/>
<dbReference type="GlyCosmos" id="B3MKS0">
    <property type="glycosylation" value="7 sites, No reported glycans"/>
</dbReference>
<dbReference type="EnsemblMetazoa" id="FBtr0119167">
    <property type="protein sequence ID" value="FBpp0117659"/>
    <property type="gene ID" value="FBgn0091494"/>
</dbReference>
<dbReference type="EnsemblMetazoa" id="XM_001962344.4">
    <property type="protein sequence ID" value="XP_001962380.1"/>
    <property type="gene ID" value="LOC6497291"/>
</dbReference>
<dbReference type="GeneID" id="6497291"/>
<dbReference type="KEGG" id="dan:6497291"/>
<dbReference type="eggNOG" id="ENOG502QSGM">
    <property type="taxonomic scope" value="Eukaryota"/>
</dbReference>
<dbReference type="HOGENOM" id="CLU_004633_1_0_1"/>
<dbReference type="InParanoid" id="B3MKS0"/>
<dbReference type="OMA" id="CGLMEGK"/>
<dbReference type="OrthoDB" id="9998697at2759"/>
<dbReference type="PhylomeDB" id="B3MKS0"/>
<dbReference type="Proteomes" id="UP000007801">
    <property type="component" value="Unassembled WGS sequence"/>
</dbReference>
<dbReference type="GO" id="GO:0030424">
    <property type="term" value="C:axon"/>
    <property type="evidence" value="ECO:0007669"/>
    <property type="project" value="TreeGrafter"/>
</dbReference>
<dbReference type="GO" id="GO:0009986">
    <property type="term" value="C:cell surface"/>
    <property type="evidence" value="ECO:0007669"/>
    <property type="project" value="EnsemblMetazoa"/>
</dbReference>
<dbReference type="GO" id="GO:0035230">
    <property type="term" value="C:cytoneme"/>
    <property type="evidence" value="ECO:0007669"/>
    <property type="project" value="EnsemblMetazoa"/>
</dbReference>
<dbReference type="GO" id="GO:0016020">
    <property type="term" value="C:membrane"/>
    <property type="evidence" value="ECO:0000250"/>
    <property type="project" value="UniProtKB"/>
</dbReference>
<dbReference type="GO" id="GO:0005886">
    <property type="term" value="C:plasma membrane"/>
    <property type="evidence" value="ECO:0007669"/>
    <property type="project" value="EnsemblMetazoa"/>
</dbReference>
<dbReference type="GO" id="GO:0015026">
    <property type="term" value="F:coreceptor activity"/>
    <property type="evidence" value="ECO:0007669"/>
    <property type="project" value="EnsemblMetazoa"/>
</dbReference>
<dbReference type="GO" id="GO:0097108">
    <property type="term" value="F:hedgehog family protein binding"/>
    <property type="evidence" value="ECO:0007669"/>
    <property type="project" value="EnsemblMetazoa"/>
</dbReference>
<dbReference type="GO" id="GO:0008201">
    <property type="term" value="F:heparin binding"/>
    <property type="evidence" value="ECO:0000250"/>
    <property type="project" value="UniProtKB"/>
</dbReference>
<dbReference type="GO" id="GO:0005113">
    <property type="term" value="F:patched binding"/>
    <property type="evidence" value="ECO:0007669"/>
    <property type="project" value="EnsemblMetazoa"/>
</dbReference>
<dbReference type="GO" id="GO:0042803">
    <property type="term" value="F:protein homodimerization activity"/>
    <property type="evidence" value="ECO:0000250"/>
    <property type="project" value="UniProtKB"/>
</dbReference>
<dbReference type="GO" id="GO:0007411">
    <property type="term" value="P:axon guidance"/>
    <property type="evidence" value="ECO:0007669"/>
    <property type="project" value="TreeGrafter"/>
</dbReference>
<dbReference type="GO" id="GO:0048749">
    <property type="term" value="P:compound eye development"/>
    <property type="evidence" value="ECO:0007669"/>
    <property type="project" value="EnsemblMetazoa"/>
</dbReference>
<dbReference type="GO" id="GO:0035017">
    <property type="term" value="P:cuticle pattern formation"/>
    <property type="evidence" value="ECO:0007669"/>
    <property type="project" value="EnsemblMetazoa"/>
</dbReference>
<dbReference type="GO" id="GO:0034109">
    <property type="term" value="P:homotypic cell-cell adhesion"/>
    <property type="evidence" value="ECO:0007669"/>
    <property type="project" value="EnsemblMetazoa"/>
</dbReference>
<dbReference type="GO" id="GO:0071694">
    <property type="term" value="P:maintenance of protein location in extracellular region"/>
    <property type="evidence" value="ECO:0007669"/>
    <property type="project" value="EnsemblMetazoa"/>
</dbReference>
<dbReference type="GO" id="GO:0007379">
    <property type="term" value="P:segment specification"/>
    <property type="evidence" value="ECO:0007669"/>
    <property type="project" value="EnsemblMetazoa"/>
</dbReference>
<dbReference type="GO" id="GO:0007224">
    <property type="term" value="P:smoothened signaling pathway"/>
    <property type="evidence" value="ECO:0000250"/>
    <property type="project" value="UniProtKB"/>
</dbReference>
<dbReference type="GO" id="GO:0048100">
    <property type="term" value="P:wing disc anterior/posterior pattern formation"/>
    <property type="evidence" value="ECO:0007669"/>
    <property type="project" value="EnsemblMetazoa"/>
</dbReference>
<dbReference type="CDD" id="cd00063">
    <property type="entry name" value="FN3"/>
    <property type="match status" value="2"/>
</dbReference>
<dbReference type="CDD" id="cd00096">
    <property type="entry name" value="Ig"/>
    <property type="match status" value="1"/>
</dbReference>
<dbReference type="FunFam" id="2.60.40.10:FF:001723">
    <property type="entry name" value="Interference hedgehog"/>
    <property type="match status" value="1"/>
</dbReference>
<dbReference type="FunFam" id="2.60.40.10:FF:001747">
    <property type="entry name" value="Interference hedgehog"/>
    <property type="match status" value="1"/>
</dbReference>
<dbReference type="FunFam" id="2.60.40.10:FF:001773">
    <property type="entry name" value="Interference hedgehog"/>
    <property type="match status" value="1"/>
</dbReference>
<dbReference type="FunFam" id="2.60.40.10:FF:002071">
    <property type="entry name" value="Interference hedgehog"/>
    <property type="match status" value="1"/>
</dbReference>
<dbReference type="FunFam" id="2.60.40.10:FF:002212">
    <property type="entry name" value="Interference hedgehog"/>
    <property type="match status" value="1"/>
</dbReference>
<dbReference type="Gene3D" id="2.60.40.10">
    <property type="entry name" value="Immunoglobulins"/>
    <property type="match status" value="5"/>
</dbReference>
<dbReference type="InterPro" id="IPR003961">
    <property type="entry name" value="FN3_dom"/>
</dbReference>
<dbReference type="InterPro" id="IPR036116">
    <property type="entry name" value="FN3_sf"/>
</dbReference>
<dbReference type="InterPro" id="IPR007110">
    <property type="entry name" value="Ig-like_dom"/>
</dbReference>
<dbReference type="InterPro" id="IPR036179">
    <property type="entry name" value="Ig-like_dom_sf"/>
</dbReference>
<dbReference type="InterPro" id="IPR013783">
    <property type="entry name" value="Ig-like_fold"/>
</dbReference>
<dbReference type="InterPro" id="IPR003599">
    <property type="entry name" value="Ig_sub"/>
</dbReference>
<dbReference type="InterPro" id="IPR003598">
    <property type="entry name" value="Ig_sub2"/>
</dbReference>
<dbReference type="PANTHER" id="PTHR44170:SF33">
    <property type="entry name" value="BROTHER OF IHOG, ISOFORM G-RELATED"/>
    <property type="match status" value="1"/>
</dbReference>
<dbReference type="PANTHER" id="PTHR44170">
    <property type="entry name" value="PROTEIN SIDEKICK"/>
    <property type="match status" value="1"/>
</dbReference>
<dbReference type="Pfam" id="PF00041">
    <property type="entry name" value="fn3"/>
    <property type="match status" value="2"/>
</dbReference>
<dbReference type="Pfam" id="PF13895">
    <property type="entry name" value="Ig_2"/>
    <property type="match status" value="1"/>
</dbReference>
<dbReference type="Pfam" id="PF13927">
    <property type="entry name" value="Ig_3"/>
    <property type="match status" value="2"/>
</dbReference>
<dbReference type="SMART" id="SM00060">
    <property type="entry name" value="FN3"/>
    <property type="match status" value="2"/>
</dbReference>
<dbReference type="SMART" id="SM00409">
    <property type="entry name" value="IG"/>
    <property type="match status" value="4"/>
</dbReference>
<dbReference type="SMART" id="SM00408">
    <property type="entry name" value="IGc2"/>
    <property type="match status" value="3"/>
</dbReference>
<dbReference type="SUPFAM" id="SSF49265">
    <property type="entry name" value="Fibronectin type III"/>
    <property type="match status" value="1"/>
</dbReference>
<dbReference type="SUPFAM" id="SSF48726">
    <property type="entry name" value="Immunoglobulin"/>
    <property type="match status" value="3"/>
</dbReference>
<dbReference type="PROSITE" id="PS50853">
    <property type="entry name" value="FN3"/>
    <property type="match status" value="2"/>
</dbReference>
<dbReference type="PROSITE" id="PS50835">
    <property type="entry name" value="IG_LIKE"/>
    <property type="match status" value="4"/>
</dbReference>
<protein>
    <recommendedName>
        <fullName evidence="1">Interference hedgehog</fullName>
    </recommendedName>
</protein>
<accession>B3MKS0</accession>
<organism>
    <name type="scientific">Drosophila ananassae</name>
    <name type="common">Fruit fly</name>
    <dbReference type="NCBI Taxonomy" id="7217"/>
    <lineage>
        <taxon>Eukaryota</taxon>
        <taxon>Metazoa</taxon>
        <taxon>Ecdysozoa</taxon>
        <taxon>Arthropoda</taxon>
        <taxon>Hexapoda</taxon>
        <taxon>Insecta</taxon>
        <taxon>Pterygota</taxon>
        <taxon>Neoptera</taxon>
        <taxon>Endopterygota</taxon>
        <taxon>Diptera</taxon>
        <taxon>Brachycera</taxon>
        <taxon>Muscomorpha</taxon>
        <taxon>Ephydroidea</taxon>
        <taxon>Drosophilidae</taxon>
        <taxon>Drosophila</taxon>
        <taxon>Sophophora</taxon>
    </lineage>
</organism>
<reference evidence="7" key="1">
    <citation type="journal article" date="2007" name="Nature">
        <title>Evolution of genes and genomes on the Drosophila phylogeny.</title>
        <authorList>
            <consortium name="Drosophila 12 genomes consortium"/>
        </authorList>
    </citation>
    <scope>NUCLEOTIDE SEQUENCE [LARGE SCALE GENOMIC DNA]</scope>
    <source>
        <strain evidence="7">Tucson 14024-0371.13</strain>
    </source>
</reference>
<feature type="signal peptide" evidence="2">
    <location>
        <begin position="1"/>
        <end position="20"/>
    </location>
</feature>
<feature type="chain" id="PRO_0000383612" description="Interference hedgehog" evidence="2">
    <location>
        <begin position="21"/>
        <end position="880"/>
    </location>
</feature>
<feature type="topological domain" description="Extracellular" evidence="2">
    <location>
        <begin position="21"/>
        <end position="703"/>
    </location>
</feature>
<feature type="transmembrane region" description="Helical" evidence="2">
    <location>
        <begin position="704"/>
        <end position="724"/>
    </location>
</feature>
<feature type="topological domain" description="Cytoplasmic" evidence="2">
    <location>
        <begin position="725"/>
        <end position="880"/>
    </location>
</feature>
<feature type="domain" description="Ig-like C2-type 1" evidence="2">
    <location>
        <begin position="37"/>
        <end position="142"/>
    </location>
</feature>
<feature type="domain" description="Ig-like C2-type 2" evidence="2">
    <location>
        <begin position="154"/>
        <end position="235"/>
    </location>
</feature>
<feature type="domain" description="Ig-like C2-type 3" evidence="2">
    <location>
        <begin position="251"/>
        <end position="339"/>
    </location>
</feature>
<feature type="domain" description="Ig-like C2-type 4" evidence="2">
    <location>
        <begin position="345"/>
        <end position="432"/>
    </location>
</feature>
<feature type="domain" description="Fibronectin type-III 1" evidence="4">
    <location>
        <begin position="462"/>
        <end position="570"/>
    </location>
</feature>
<feature type="domain" description="Fibronectin type-III 2" evidence="4">
    <location>
        <begin position="578"/>
        <end position="673"/>
    </location>
</feature>
<feature type="region of interest" description="Disordered" evidence="5">
    <location>
        <begin position="435"/>
        <end position="468"/>
    </location>
</feature>
<feature type="region of interest" description="Disordered" evidence="5">
    <location>
        <begin position="665"/>
        <end position="699"/>
    </location>
</feature>
<feature type="region of interest" description="Disordered" evidence="5">
    <location>
        <begin position="797"/>
        <end position="880"/>
    </location>
</feature>
<feature type="compositionally biased region" description="Polar residues" evidence="5">
    <location>
        <begin position="668"/>
        <end position="699"/>
    </location>
</feature>
<feature type="compositionally biased region" description="Low complexity" evidence="5">
    <location>
        <begin position="827"/>
        <end position="839"/>
    </location>
</feature>
<feature type="compositionally biased region" description="Low complexity" evidence="5">
    <location>
        <begin position="864"/>
        <end position="880"/>
    </location>
</feature>
<feature type="binding site" evidence="1">
    <location>
        <position position="498"/>
    </location>
    <ligand>
        <name>heparin</name>
        <dbReference type="ChEBI" id="CHEBI:28304"/>
    </ligand>
</feature>
<feature type="binding site" evidence="1">
    <location>
        <position position="504"/>
    </location>
    <ligand>
        <name>heparin</name>
        <dbReference type="ChEBI" id="CHEBI:28304"/>
    </ligand>
</feature>
<feature type="binding site" evidence="1">
    <location>
        <position position="506"/>
    </location>
    <ligand>
        <name>heparin</name>
        <dbReference type="ChEBI" id="CHEBI:28304"/>
    </ligand>
</feature>
<feature type="binding site" evidence="1">
    <location>
        <position position="544"/>
    </location>
    <ligand>
        <name>heparin</name>
        <dbReference type="ChEBI" id="CHEBI:28304"/>
    </ligand>
</feature>
<feature type="glycosylation site" description="N-linked (GlcNAc...) asparagine" evidence="2">
    <location>
        <position position="79"/>
    </location>
</feature>
<feature type="glycosylation site" description="N-linked (GlcNAc...) asparagine" evidence="2">
    <location>
        <position position="102"/>
    </location>
</feature>
<feature type="glycosylation site" description="N-linked (GlcNAc...) asparagine" evidence="2">
    <location>
        <position position="208"/>
    </location>
</feature>
<feature type="glycosylation site" description="N-linked (GlcNAc...) asparagine" evidence="2">
    <location>
        <position position="447"/>
    </location>
</feature>
<feature type="glycosylation site" description="N-linked (GlcNAc...) asparagine" evidence="2">
    <location>
        <position position="467"/>
    </location>
</feature>
<feature type="glycosylation site" description="N-linked (GlcNAc...) asparagine" evidence="2">
    <location>
        <position position="560"/>
    </location>
</feature>
<feature type="glycosylation site" description="N-linked (GlcNAc...) asparagine" evidence="2">
    <location>
        <position position="696"/>
    </location>
</feature>
<feature type="disulfide bond" evidence="3">
    <location>
        <begin position="60"/>
        <end position="126"/>
    </location>
</feature>
<feature type="disulfide bond" evidence="3">
    <location>
        <begin position="172"/>
        <end position="219"/>
    </location>
</feature>
<feature type="disulfide bond" evidence="3">
    <location>
        <begin position="275"/>
        <end position="323"/>
    </location>
</feature>
<feature type="disulfide bond" evidence="3">
    <location>
        <begin position="366"/>
        <end position="414"/>
    </location>
</feature>
<proteinExistence type="inferred from homology"/>
<sequence length="880" mass="96924">MPSIVSSLLLVVLLTSPLGAIPVLYPSPPPLPAYPSPGVRILRPPESLVAPLGDEVVLECETSLPPERFEWSYRRWTPNGTAVNGSPGAGFKYLKTSSMKANVTQEAAISRLKVLVRQDTLGEYRCNGWFGPLLVTSTTARLELATTSVKSQEPVTSLQWQITNGNSVLWPCGQPVRSNPAASWTFYRNGVELGPEYSGTGGNLFLRNVSVDSSGSYSCQATNPASGERIKSTSSMELQVVPSRGSQVKAPYLLPGQPGSQTVTAIEGGTLLLLCPGVGSPPPTAVWSSPDIVGAVNNKRTRVLAHALEISNVQIGDSGTYICYLDNGVRPPLEHFIQVKVEQPPQIVRPPWIDMVNEGERVQLECEATGVPTPEIYWLLNGKSSIYDTEAEQLPNGHLVLHSVLKRHAGYVQCFARNSLGEHSAGMSLQVTPKPIHSESTQQSDHNHSKANRGRRPAQMIPPSAPNVTRLSDESVMLRWMVPRNDGLAILFFKVQYRTVGEGKRKNWQTTNENIPYGRPEWNSEMGKSFTASVTDLKPQRTYRFRIMAVYTNNDNKESNMSAKFFLQPGAALDPMPVPEMLEIDEYSETAVVLHWRLDSDADEQLITGYYAYYRPSSSAGEYFKATIEGASSRSFTIGNLEAGTVYEFKLQSFSAESASEFSALKQGRTQRPMVSTTEEATLQTGVRDTTTPSHNETFSMSPIVTGTIGGGAVLILFVVTTCLCMWRRRNSRAHRGGGQNKPRMAELREDFVPLDSCSPTKQRQRSRHIHITLNPLAQQQQQALDEKNDAEHDMTYFQRQPTYDYDPGLRRMSSSSLRRSQRTLERAGSSNGNNNNLNQSADMGPVDNPGKPGRVLMKRPRLSSRSENLSSGSLNSVGV</sequence>
<evidence type="ECO:0000250" key="1">
    <source>
        <dbReference type="UniProtKB" id="Q9VM64"/>
    </source>
</evidence>
<evidence type="ECO:0000255" key="2"/>
<evidence type="ECO:0000255" key="3">
    <source>
        <dbReference type="PROSITE-ProRule" id="PRU00114"/>
    </source>
</evidence>
<evidence type="ECO:0000255" key="4">
    <source>
        <dbReference type="PROSITE-ProRule" id="PRU00316"/>
    </source>
</evidence>
<evidence type="ECO:0000256" key="5">
    <source>
        <dbReference type="SAM" id="MobiDB-lite"/>
    </source>
</evidence>
<evidence type="ECO:0000305" key="6"/>
<evidence type="ECO:0000312" key="7">
    <source>
        <dbReference type="EMBL" id="EDV31601.1"/>
    </source>
</evidence>